<protein>
    <recommendedName>
        <fullName>Movement protein</fullName>
        <shortName>Mov</shortName>
    </recommendedName>
    <alternativeName>
        <fullName>Cell-to-cell transport protein</fullName>
    </alternativeName>
</protein>
<evidence type="ECO:0000250" key="1"/>
<evidence type="ECO:0000305" key="2"/>
<reference key="1">
    <citation type="journal article" date="1993" name="Gene">
        <title>The complete nucleotide sequence of cauliflower mosaic virus isolate BBC.</title>
        <authorList>
            <person name="Chenault K.D."/>
            <person name="Melcher U.K."/>
        </authorList>
    </citation>
    <scope>NUCLEOTIDE SEQUENCE [GENOMIC DNA]</scope>
</reference>
<name>MVP_CAMVE</name>
<comment type="function">
    <text evidence="1">Transports viral genome to neighboring plant cells directly through plasmosdesmata, without any budding. The movement protein allows efficient cell to cell propagation, by bypassing the host cell wall barrier. Acts by forming tubules structures that increase the size exclusion limit (SEL) of plasmodesmata, thereby allowing viral ribonucleocapsids to spread directly to neighboring cells (By similarity).</text>
</comment>
<comment type="subunit">
    <text evidence="1">Homotrimer, through the coiled-coil domain. Interacts with VAP. May interact (via N-terminus) with host prenylated Rab acceptor protein 1D (PRA1D).</text>
</comment>
<comment type="subcellular location">
    <subcellularLocation>
        <location>Host cell junction</location>
        <location>Host plasmodesma</location>
    </subcellularLocation>
    <text>Assembles in tubules that are embedded within modified plasmodesmata.</text>
</comment>
<comment type="similarity">
    <text evidence="2">Belongs to the caulimoviridae movement protein family.</text>
</comment>
<gene>
    <name type="ORF">ORF I</name>
</gene>
<dbReference type="EMBL" id="M90542">
    <property type="protein sequence ID" value="AAA62371.1"/>
    <property type="molecule type" value="Genomic_DNA"/>
</dbReference>
<dbReference type="Proteomes" id="UP000008440">
    <property type="component" value="Genome"/>
</dbReference>
<dbReference type="GO" id="GO:0044219">
    <property type="term" value="C:host cell plasmodesma"/>
    <property type="evidence" value="ECO:0007669"/>
    <property type="project" value="UniProtKB-SubCell"/>
</dbReference>
<dbReference type="GO" id="GO:0046740">
    <property type="term" value="P:transport of virus in host, cell to cell"/>
    <property type="evidence" value="ECO:0007669"/>
    <property type="project" value="UniProtKB-KW"/>
</dbReference>
<dbReference type="InterPro" id="IPR051596">
    <property type="entry name" value="Caulimoviridae_Movement"/>
</dbReference>
<dbReference type="InterPro" id="IPR028919">
    <property type="entry name" value="Viral_movement"/>
</dbReference>
<dbReference type="PANTHER" id="PTHR47599">
    <property type="entry name" value="CELL-TO-CELL MOVEMENT PROTEIN"/>
    <property type="match status" value="1"/>
</dbReference>
<dbReference type="PANTHER" id="PTHR47599:SF3">
    <property type="entry name" value="CELL-TO-CELL MOVEMENT PROTEIN"/>
    <property type="match status" value="1"/>
</dbReference>
<dbReference type="Pfam" id="PF01107">
    <property type="entry name" value="MP"/>
    <property type="match status" value="1"/>
</dbReference>
<proteinExistence type="inferred from homology"/>
<keyword id="KW-0175">Coiled coil</keyword>
<keyword id="KW-1031">Host cell junction</keyword>
<keyword id="KW-0945">Host-virus interaction</keyword>
<keyword id="KW-0813">Transport</keyword>
<keyword id="KW-0916">Viral movement protein</keyword>
<feature type="chain" id="PRO_0000222060" description="Movement protein">
    <location>
        <begin position="1"/>
        <end position="327"/>
    </location>
</feature>
<feature type="coiled-coil region" evidence="1">
    <location>
        <begin position="297"/>
        <end position="327"/>
    </location>
</feature>
<sequence>MDLYPEENTQSEQSQNSENNMQIFKSENSDGFSSDLMISNDQLKNISKTQLTLEKEKIFKMPNVLSQVMKRAFSRKNEILYCVSTKELSVDIHDATGKVYLPLITREEINKRLSSLKPEVRKTMSMVHLGAVKILLKAQFRNGIDTPIKIALIDDRINSRRDCLLGAAKGNLAYGKFMFTVYPKFGISLNTQRLNQTLSLIHDFENKNLMNKGDKVMTITYMVGYALTNSHHSIDYQSNATIELEDVFQEIGNVHESDFCTIQNDECNWAIDIAQNKALLGAKTKSQIGNNLQIGNSASSSNTENELARVSQNIDLLKNKLKEICGE</sequence>
<accession>Q02968</accession>
<organismHost>
    <name type="scientific">Arabidopsis thaliana</name>
    <name type="common">Mouse-ear cress</name>
    <dbReference type="NCBI Taxonomy" id="3702"/>
</organismHost>
<organismHost>
    <name type="scientific">Brassica</name>
    <dbReference type="NCBI Taxonomy" id="3705"/>
</organismHost>
<organismHost>
    <name type="scientific">Raphanus</name>
    <dbReference type="NCBI Taxonomy" id="3725"/>
</organismHost>
<organism>
    <name type="scientific">Cauliflower mosaic virus (strain BBC)</name>
    <name type="common">CaMV</name>
    <dbReference type="NCBI Taxonomy" id="31556"/>
    <lineage>
        <taxon>Viruses</taxon>
        <taxon>Riboviria</taxon>
        <taxon>Pararnavirae</taxon>
        <taxon>Artverviricota</taxon>
        <taxon>Revtraviricetes</taxon>
        <taxon>Ortervirales</taxon>
        <taxon>Caulimoviridae</taxon>
        <taxon>Caulimovirus</taxon>
        <taxon>Caulimovirus tessellobrassicae</taxon>
    </lineage>
</organism>